<name>BIOB_MACCJ</name>
<keyword id="KW-0001">2Fe-2S</keyword>
<keyword id="KW-0004">4Fe-4S</keyword>
<keyword id="KW-0093">Biotin biosynthesis</keyword>
<keyword id="KW-0408">Iron</keyword>
<keyword id="KW-0411">Iron-sulfur</keyword>
<keyword id="KW-0479">Metal-binding</keyword>
<keyword id="KW-1185">Reference proteome</keyword>
<keyword id="KW-0949">S-adenosyl-L-methionine</keyword>
<keyword id="KW-0808">Transferase</keyword>
<dbReference type="EC" id="2.8.1.6" evidence="1"/>
<dbReference type="EMBL" id="AP009484">
    <property type="protein sequence ID" value="BAH17083.1"/>
    <property type="molecule type" value="Genomic_DNA"/>
</dbReference>
<dbReference type="RefSeq" id="WP_012656284.1">
    <property type="nucleotide sequence ID" value="NC_011999.1"/>
</dbReference>
<dbReference type="SMR" id="B9EA22"/>
<dbReference type="STRING" id="458233.MCCL_0376"/>
<dbReference type="KEGG" id="mcl:MCCL_0376"/>
<dbReference type="eggNOG" id="COG0502">
    <property type="taxonomic scope" value="Bacteria"/>
</dbReference>
<dbReference type="HOGENOM" id="CLU_033172_2_1_9"/>
<dbReference type="OrthoDB" id="9786826at2"/>
<dbReference type="UniPathway" id="UPA00078">
    <property type="reaction ID" value="UER00162"/>
</dbReference>
<dbReference type="Proteomes" id="UP000001383">
    <property type="component" value="Chromosome"/>
</dbReference>
<dbReference type="GO" id="GO:0051537">
    <property type="term" value="F:2 iron, 2 sulfur cluster binding"/>
    <property type="evidence" value="ECO:0007669"/>
    <property type="project" value="UniProtKB-KW"/>
</dbReference>
<dbReference type="GO" id="GO:0051539">
    <property type="term" value="F:4 iron, 4 sulfur cluster binding"/>
    <property type="evidence" value="ECO:0007669"/>
    <property type="project" value="UniProtKB-KW"/>
</dbReference>
<dbReference type="GO" id="GO:0004076">
    <property type="term" value="F:biotin synthase activity"/>
    <property type="evidence" value="ECO:0007669"/>
    <property type="project" value="UniProtKB-UniRule"/>
</dbReference>
<dbReference type="GO" id="GO:0005506">
    <property type="term" value="F:iron ion binding"/>
    <property type="evidence" value="ECO:0007669"/>
    <property type="project" value="UniProtKB-UniRule"/>
</dbReference>
<dbReference type="GO" id="GO:0009102">
    <property type="term" value="P:biotin biosynthetic process"/>
    <property type="evidence" value="ECO:0007669"/>
    <property type="project" value="UniProtKB-UniRule"/>
</dbReference>
<dbReference type="CDD" id="cd01335">
    <property type="entry name" value="Radical_SAM"/>
    <property type="match status" value="1"/>
</dbReference>
<dbReference type="FunFam" id="3.20.20.70:FF:000026">
    <property type="entry name" value="Biotin synthase"/>
    <property type="match status" value="1"/>
</dbReference>
<dbReference type="Gene3D" id="3.20.20.70">
    <property type="entry name" value="Aldolase class I"/>
    <property type="match status" value="1"/>
</dbReference>
<dbReference type="HAMAP" id="MF_01694">
    <property type="entry name" value="BioB"/>
    <property type="match status" value="1"/>
</dbReference>
<dbReference type="InterPro" id="IPR013785">
    <property type="entry name" value="Aldolase_TIM"/>
</dbReference>
<dbReference type="InterPro" id="IPR010722">
    <property type="entry name" value="BATS_dom"/>
</dbReference>
<dbReference type="InterPro" id="IPR002684">
    <property type="entry name" value="Biotin_synth/BioAB"/>
</dbReference>
<dbReference type="InterPro" id="IPR024177">
    <property type="entry name" value="Biotin_synthase"/>
</dbReference>
<dbReference type="InterPro" id="IPR006638">
    <property type="entry name" value="Elp3/MiaA/NifB-like_rSAM"/>
</dbReference>
<dbReference type="InterPro" id="IPR007197">
    <property type="entry name" value="rSAM"/>
</dbReference>
<dbReference type="NCBIfam" id="TIGR00433">
    <property type="entry name" value="bioB"/>
    <property type="match status" value="1"/>
</dbReference>
<dbReference type="PANTHER" id="PTHR22976">
    <property type="entry name" value="BIOTIN SYNTHASE"/>
    <property type="match status" value="1"/>
</dbReference>
<dbReference type="PANTHER" id="PTHR22976:SF2">
    <property type="entry name" value="BIOTIN SYNTHASE, MITOCHONDRIAL"/>
    <property type="match status" value="1"/>
</dbReference>
<dbReference type="Pfam" id="PF06968">
    <property type="entry name" value="BATS"/>
    <property type="match status" value="1"/>
</dbReference>
<dbReference type="Pfam" id="PF04055">
    <property type="entry name" value="Radical_SAM"/>
    <property type="match status" value="1"/>
</dbReference>
<dbReference type="PIRSF" id="PIRSF001619">
    <property type="entry name" value="Biotin_synth"/>
    <property type="match status" value="1"/>
</dbReference>
<dbReference type="SFLD" id="SFLDG01278">
    <property type="entry name" value="biotin_synthase_like"/>
    <property type="match status" value="1"/>
</dbReference>
<dbReference type="SFLD" id="SFLDS00029">
    <property type="entry name" value="Radical_SAM"/>
    <property type="match status" value="1"/>
</dbReference>
<dbReference type="SMART" id="SM00876">
    <property type="entry name" value="BATS"/>
    <property type="match status" value="1"/>
</dbReference>
<dbReference type="SMART" id="SM00729">
    <property type="entry name" value="Elp3"/>
    <property type="match status" value="1"/>
</dbReference>
<dbReference type="SUPFAM" id="SSF102114">
    <property type="entry name" value="Radical SAM enzymes"/>
    <property type="match status" value="1"/>
</dbReference>
<dbReference type="PROSITE" id="PS51918">
    <property type="entry name" value="RADICAL_SAM"/>
    <property type="match status" value="1"/>
</dbReference>
<feature type="chain" id="PRO_0000381450" description="Biotin synthase">
    <location>
        <begin position="1"/>
        <end position="330"/>
    </location>
</feature>
<feature type="domain" description="Radical SAM core" evidence="2">
    <location>
        <begin position="42"/>
        <end position="268"/>
    </location>
</feature>
<feature type="binding site" evidence="1">
    <location>
        <position position="60"/>
    </location>
    <ligand>
        <name>[4Fe-4S] cluster</name>
        <dbReference type="ChEBI" id="CHEBI:49883"/>
        <note>4Fe-4S-S-AdoMet</note>
    </ligand>
</feature>
<feature type="binding site" evidence="1">
    <location>
        <position position="64"/>
    </location>
    <ligand>
        <name>[4Fe-4S] cluster</name>
        <dbReference type="ChEBI" id="CHEBI:49883"/>
        <note>4Fe-4S-S-AdoMet</note>
    </ligand>
</feature>
<feature type="binding site" evidence="1">
    <location>
        <position position="67"/>
    </location>
    <ligand>
        <name>[4Fe-4S] cluster</name>
        <dbReference type="ChEBI" id="CHEBI:49883"/>
        <note>4Fe-4S-S-AdoMet</note>
    </ligand>
</feature>
<feature type="binding site" evidence="1">
    <location>
        <position position="103"/>
    </location>
    <ligand>
        <name>[2Fe-2S] cluster</name>
        <dbReference type="ChEBI" id="CHEBI:190135"/>
    </ligand>
</feature>
<feature type="binding site" evidence="1">
    <location>
        <position position="136"/>
    </location>
    <ligand>
        <name>[2Fe-2S] cluster</name>
        <dbReference type="ChEBI" id="CHEBI:190135"/>
    </ligand>
</feature>
<feature type="binding site" evidence="1">
    <location>
        <position position="196"/>
    </location>
    <ligand>
        <name>[2Fe-2S] cluster</name>
        <dbReference type="ChEBI" id="CHEBI:190135"/>
    </ligand>
</feature>
<feature type="binding site" evidence="1">
    <location>
        <position position="266"/>
    </location>
    <ligand>
        <name>[2Fe-2S] cluster</name>
        <dbReference type="ChEBI" id="CHEBI:190135"/>
    </ligand>
</feature>
<protein>
    <recommendedName>
        <fullName evidence="1">Biotin synthase</fullName>
        <ecNumber evidence="1">2.8.1.6</ecNumber>
    </recommendedName>
</protein>
<evidence type="ECO:0000255" key="1">
    <source>
        <dbReference type="HAMAP-Rule" id="MF_01694"/>
    </source>
</evidence>
<evidence type="ECO:0000255" key="2">
    <source>
        <dbReference type="PROSITE-ProRule" id="PRU01266"/>
    </source>
</evidence>
<proteinExistence type="inferred from homology"/>
<accession>B9EA22</accession>
<comment type="function">
    <text evidence="1">Catalyzes the conversion of dethiobiotin (DTB) to biotin by the insertion of a sulfur atom into dethiobiotin via a radical-based mechanism.</text>
</comment>
<comment type="catalytic activity">
    <reaction evidence="1">
        <text>(4R,5S)-dethiobiotin + (sulfur carrier)-SH + 2 reduced [2Fe-2S]-[ferredoxin] + 2 S-adenosyl-L-methionine = (sulfur carrier)-H + biotin + 2 5'-deoxyadenosine + 2 L-methionine + 2 oxidized [2Fe-2S]-[ferredoxin]</text>
        <dbReference type="Rhea" id="RHEA:22060"/>
        <dbReference type="Rhea" id="RHEA-COMP:10000"/>
        <dbReference type="Rhea" id="RHEA-COMP:10001"/>
        <dbReference type="Rhea" id="RHEA-COMP:14737"/>
        <dbReference type="Rhea" id="RHEA-COMP:14739"/>
        <dbReference type="ChEBI" id="CHEBI:17319"/>
        <dbReference type="ChEBI" id="CHEBI:29917"/>
        <dbReference type="ChEBI" id="CHEBI:33737"/>
        <dbReference type="ChEBI" id="CHEBI:33738"/>
        <dbReference type="ChEBI" id="CHEBI:57586"/>
        <dbReference type="ChEBI" id="CHEBI:57844"/>
        <dbReference type="ChEBI" id="CHEBI:59789"/>
        <dbReference type="ChEBI" id="CHEBI:64428"/>
        <dbReference type="ChEBI" id="CHEBI:149473"/>
        <dbReference type="EC" id="2.8.1.6"/>
    </reaction>
</comment>
<comment type="cofactor">
    <cofactor evidence="1">
        <name>[4Fe-4S] cluster</name>
        <dbReference type="ChEBI" id="CHEBI:49883"/>
    </cofactor>
    <text evidence="1">Binds 1 [4Fe-4S] cluster. The cluster is coordinated with 3 cysteines and an exchangeable S-adenosyl-L-methionine.</text>
</comment>
<comment type="cofactor">
    <cofactor evidence="1">
        <name>[2Fe-2S] cluster</name>
        <dbReference type="ChEBI" id="CHEBI:190135"/>
    </cofactor>
    <text evidence="1">Binds 1 [2Fe-2S] cluster. The cluster is coordinated with 3 cysteines and 1 arginine.</text>
</comment>
<comment type="pathway">
    <text evidence="1">Cofactor biosynthesis; biotin biosynthesis; biotin from 7,8-diaminononanoate: step 2/2.</text>
</comment>
<comment type="subunit">
    <text evidence="1">Homodimer.</text>
</comment>
<comment type="similarity">
    <text evidence="1">Belongs to the radical SAM superfamily. Biotin synthase family.</text>
</comment>
<gene>
    <name evidence="1" type="primary">bioB</name>
    <name type="ordered locus">MCCL_0376</name>
</gene>
<organism>
    <name type="scientific">Macrococcus caseolyticus (strain JCSC5402)</name>
    <name type="common">Macrococcoides caseolyticum</name>
    <dbReference type="NCBI Taxonomy" id="458233"/>
    <lineage>
        <taxon>Bacteria</taxon>
        <taxon>Bacillati</taxon>
        <taxon>Bacillota</taxon>
        <taxon>Bacilli</taxon>
        <taxon>Bacillales</taxon>
        <taxon>Staphylococcaceae</taxon>
        <taxon>Macrococcoides</taxon>
    </lineage>
</organism>
<sequence>MLAQRIINGENISKEEALSLFVDNNIDTYDLLHEAYQVRKYYYGRKVKLNMILNAKSGICPEDCGYCGQSKLMKNKDKYLLVDSEQIKSGADFCATHDIGTYCIVMSGRGPSDKEVEHIADTVEAIKHEHPQLKICACLGLTNDEQAKKLKLAGVDRYNHNINTSENYHDEVVTTHTYQDRVDTIEIMKANNISPCSGVICGMGETDEDIIDMALALRAIDADSIPVNFLHPVKGTKFGNEDNLTPERCLRILSMFRLINPSKEIRIAGGREVNLRTLQPLAMQAANSIFVGDYLITDGQPNELDYKMLEDLGFEIDINESEINKAALKI</sequence>
<reference key="1">
    <citation type="journal article" date="2009" name="J. Bacteriol.">
        <title>Complete genome sequence of Macrococcus caseolyticus strain JCSCS5402, reflecting the ancestral genome of the human-pathogenic staphylococci.</title>
        <authorList>
            <person name="Baba T."/>
            <person name="Kuwahara-Arai K."/>
            <person name="Uchiyama I."/>
            <person name="Takeuchi F."/>
            <person name="Ito T."/>
            <person name="Hiramatsu K."/>
        </authorList>
    </citation>
    <scope>NUCLEOTIDE SEQUENCE [LARGE SCALE GENOMIC DNA]</scope>
    <source>
        <strain>JCSC5402</strain>
    </source>
</reference>